<proteinExistence type="inferred from homology"/>
<feature type="chain" id="PRO_0000129225" description="Large ribosomal subunit protein uL4">
    <location>
        <begin position="1"/>
        <end position="215"/>
    </location>
</feature>
<feature type="region of interest" description="Disordered" evidence="2">
    <location>
        <begin position="46"/>
        <end position="72"/>
    </location>
</feature>
<feature type="compositionally biased region" description="Gly residues" evidence="2">
    <location>
        <begin position="56"/>
        <end position="71"/>
    </location>
</feature>
<protein>
    <recommendedName>
        <fullName evidence="1">Large ribosomal subunit protein uL4</fullName>
    </recommendedName>
    <alternativeName>
        <fullName evidence="3">50S ribosomal protein L4</fullName>
    </alternativeName>
</protein>
<accession>P56032</accession>
<reference key="1">
    <citation type="journal article" date="1997" name="Nature">
        <title>The complete genome sequence of the gastric pathogen Helicobacter pylori.</title>
        <authorList>
            <person name="Tomb J.-F."/>
            <person name="White O."/>
            <person name="Kerlavage A.R."/>
            <person name="Clayton R.A."/>
            <person name="Sutton G.G."/>
            <person name="Fleischmann R.D."/>
            <person name="Ketchum K.A."/>
            <person name="Klenk H.-P."/>
            <person name="Gill S.R."/>
            <person name="Dougherty B.A."/>
            <person name="Nelson K.E."/>
            <person name="Quackenbush J."/>
            <person name="Zhou L."/>
            <person name="Kirkness E.F."/>
            <person name="Peterson S.N."/>
            <person name="Loftus B.J."/>
            <person name="Richardson D.L."/>
            <person name="Dodson R.J."/>
            <person name="Khalak H.G."/>
            <person name="Glodek A."/>
            <person name="McKenney K."/>
            <person name="FitzGerald L.M."/>
            <person name="Lee N."/>
            <person name="Adams M.D."/>
            <person name="Hickey E.K."/>
            <person name="Berg D.E."/>
            <person name="Gocayne J.D."/>
            <person name="Utterback T.R."/>
            <person name="Peterson J.D."/>
            <person name="Kelley J.M."/>
            <person name="Cotton M.D."/>
            <person name="Weidman J.F."/>
            <person name="Fujii C."/>
            <person name="Bowman C."/>
            <person name="Watthey L."/>
            <person name="Wallin E."/>
            <person name="Hayes W.S."/>
            <person name="Borodovsky M."/>
            <person name="Karp P.D."/>
            <person name="Smith H.O."/>
            <person name="Fraser C.M."/>
            <person name="Venter J.C."/>
        </authorList>
    </citation>
    <scope>NUCLEOTIDE SEQUENCE [LARGE SCALE GENOMIC DNA]</scope>
    <source>
        <strain>ATCC 700392 / 26695</strain>
    </source>
</reference>
<dbReference type="EMBL" id="AE000511">
    <property type="protein sequence ID" value="AAD08357.1"/>
    <property type="molecule type" value="Genomic_DNA"/>
</dbReference>
<dbReference type="PIR" id="F64684">
    <property type="entry name" value="F64684"/>
</dbReference>
<dbReference type="RefSeq" id="NP_208110.1">
    <property type="nucleotide sequence ID" value="NC_000915.1"/>
</dbReference>
<dbReference type="RefSeq" id="WP_000030195.1">
    <property type="nucleotide sequence ID" value="NC_018939.1"/>
</dbReference>
<dbReference type="SMR" id="P56032"/>
<dbReference type="DIP" id="DIP-3117N"/>
<dbReference type="FunCoup" id="P56032">
    <property type="interactions" value="445"/>
</dbReference>
<dbReference type="IntAct" id="P56032">
    <property type="interactions" value="7"/>
</dbReference>
<dbReference type="MINT" id="P56032"/>
<dbReference type="STRING" id="85962.HP_1318"/>
<dbReference type="PaxDb" id="85962-C694_06805"/>
<dbReference type="EnsemblBacteria" id="AAD08357">
    <property type="protein sequence ID" value="AAD08357"/>
    <property type="gene ID" value="HP_1318"/>
</dbReference>
<dbReference type="KEGG" id="heo:C694_06805"/>
<dbReference type="KEGG" id="hpy:HP_1318"/>
<dbReference type="PATRIC" id="fig|85962.47.peg.1412"/>
<dbReference type="eggNOG" id="COG0088">
    <property type="taxonomic scope" value="Bacteria"/>
</dbReference>
<dbReference type="InParanoid" id="P56032"/>
<dbReference type="OrthoDB" id="9803201at2"/>
<dbReference type="PhylomeDB" id="P56032"/>
<dbReference type="Proteomes" id="UP000000429">
    <property type="component" value="Chromosome"/>
</dbReference>
<dbReference type="GO" id="GO:1990904">
    <property type="term" value="C:ribonucleoprotein complex"/>
    <property type="evidence" value="ECO:0007669"/>
    <property type="project" value="UniProtKB-KW"/>
</dbReference>
<dbReference type="GO" id="GO:0005840">
    <property type="term" value="C:ribosome"/>
    <property type="evidence" value="ECO:0007669"/>
    <property type="project" value="UniProtKB-KW"/>
</dbReference>
<dbReference type="GO" id="GO:0019843">
    <property type="term" value="F:rRNA binding"/>
    <property type="evidence" value="ECO:0007669"/>
    <property type="project" value="UniProtKB-UniRule"/>
</dbReference>
<dbReference type="GO" id="GO:0003735">
    <property type="term" value="F:structural constituent of ribosome"/>
    <property type="evidence" value="ECO:0000318"/>
    <property type="project" value="GO_Central"/>
</dbReference>
<dbReference type="GO" id="GO:0006412">
    <property type="term" value="P:translation"/>
    <property type="evidence" value="ECO:0007669"/>
    <property type="project" value="UniProtKB-UniRule"/>
</dbReference>
<dbReference type="FunFam" id="3.40.1370.10:FF:000008">
    <property type="entry name" value="50S ribosomal protein L4"/>
    <property type="match status" value="1"/>
</dbReference>
<dbReference type="Gene3D" id="3.40.1370.10">
    <property type="match status" value="1"/>
</dbReference>
<dbReference type="HAMAP" id="MF_01328_B">
    <property type="entry name" value="Ribosomal_uL4_B"/>
    <property type="match status" value="1"/>
</dbReference>
<dbReference type="InterPro" id="IPR002136">
    <property type="entry name" value="Ribosomal_uL4"/>
</dbReference>
<dbReference type="InterPro" id="IPR013005">
    <property type="entry name" value="Ribosomal_uL4-like"/>
</dbReference>
<dbReference type="InterPro" id="IPR023574">
    <property type="entry name" value="Ribosomal_uL4_dom_sf"/>
</dbReference>
<dbReference type="NCBIfam" id="TIGR03953">
    <property type="entry name" value="rplD_bact"/>
    <property type="match status" value="1"/>
</dbReference>
<dbReference type="PANTHER" id="PTHR10746">
    <property type="entry name" value="50S RIBOSOMAL PROTEIN L4"/>
    <property type="match status" value="1"/>
</dbReference>
<dbReference type="PANTHER" id="PTHR10746:SF6">
    <property type="entry name" value="LARGE RIBOSOMAL SUBUNIT PROTEIN UL4M"/>
    <property type="match status" value="1"/>
</dbReference>
<dbReference type="Pfam" id="PF00573">
    <property type="entry name" value="Ribosomal_L4"/>
    <property type="match status" value="1"/>
</dbReference>
<dbReference type="SUPFAM" id="SSF52166">
    <property type="entry name" value="Ribosomal protein L4"/>
    <property type="match status" value="1"/>
</dbReference>
<evidence type="ECO:0000255" key="1">
    <source>
        <dbReference type="HAMAP-Rule" id="MF_01328"/>
    </source>
</evidence>
<evidence type="ECO:0000256" key="2">
    <source>
        <dbReference type="SAM" id="MobiDB-lite"/>
    </source>
</evidence>
<evidence type="ECO:0000305" key="3"/>
<gene>
    <name evidence="1" type="primary">rplD</name>
    <name type="ordered locus">HP_1318</name>
</gene>
<comment type="function">
    <text evidence="1">One of the primary rRNA binding proteins, this protein initially binds near the 5'-end of the 23S rRNA. It is important during the early stages of 50S assembly. It makes multiple contacts with different domains of the 23S rRNA in the assembled 50S subunit and ribosome.</text>
</comment>
<comment type="function">
    <text evidence="1">Forms part of the polypeptide exit tunnel.</text>
</comment>
<comment type="subunit">
    <text evidence="1">Part of the 50S ribosomal subunit.</text>
</comment>
<comment type="similarity">
    <text evidence="1">Belongs to the universal ribosomal protein uL4 family.</text>
</comment>
<name>RL4_HELPY</name>
<sequence>MSKAIVLDSHLKEKGSVELPKRYESINSHNLYLYVKHYLSSARANTAKSKNRAEVSGGGRKPWAQKGGGRARAGSITSPVFVGGGVSHGATNNRNYNLKINKKQKRLALEYALEEKAQANKLFVVEKIAIKGVVEDNKRKHLTKEANQMFQALEQRDTLFVCMNMDEYTELAFSNLKKCLIVDVSELNAYLLAAFSSVVMEEAAFQHVVQDKTEE</sequence>
<keyword id="KW-1185">Reference proteome</keyword>
<keyword id="KW-0687">Ribonucleoprotein</keyword>
<keyword id="KW-0689">Ribosomal protein</keyword>
<keyword id="KW-0694">RNA-binding</keyword>
<keyword id="KW-0699">rRNA-binding</keyword>
<organism>
    <name type="scientific">Helicobacter pylori (strain ATCC 700392 / 26695)</name>
    <name type="common">Campylobacter pylori</name>
    <dbReference type="NCBI Taxonomy" id="85962"/>
    <lineage>
        <taxon>Bacteria</taxon>
        <taxon>Pseudomonadati</taxon>
        <taxon>Campylobacterota</taxon>
        <taxon>Epsilonproteobacteria</taxon>
        <taxon>Campylobacterales</taxon>
        <taxon>Helicobacteraceae</taxon>
        <taxon>Helicobacter</taxon>
    </lineage>
</organism>